<feature type="chain" id="PRO_0000147713" description="GTP cyclohydrolase FolE2">
    <location>
        <begin position="1"/>
        <end position="268"/>
    </location>
</feature>
<feature type="site" description="May be catalytically important" evidence="1">
    <location>
        <position position="152"/>
    </location>
</feature>
<name>GCH4_METCA</name>
<keyword id="KW-0378">Hydrolase</keyword>
<keyword id="KW-1185">Reference proteome</keyword>
<proteinExistence type="inferred from homology"/>
<comment type="function">
    <text evidence="1">Converts GTP to 7,8-dihydroneopterin triphosphate.</text>
</comment>
<comment type="catalytic activity">
    <reaction evidence="1">
        <text>GTP + H2O = 7,8-dihydroneopterin 3'-triphosphate + formate + H(+)</text>
        <dbReference type="Rhea" id="RHEA:17473"/>
        <dbReference type="ChEBI" id="CHEBI:15377"/>
        <dbReference type="ChEBI" id="CHEBI:15378"/>
        <dbReference type="ChEBI" id="CHEBI:15740"/>
        <dbReference type="ChEBI" id="CHEBI:37565"/>
        <dbReference type="ChEBI" id="CHEBI:58462"/>
        <dbReference type="EC" id="3.5.4.16"/>
    </reaction>
</comment>
<comment type="pathway">
    <text evidence="1">Cofactor biosynthesis; 7,8-dihydroneopterin triphosphate biosynthesis; 7,8-dihydroneopterin triphosphate from GTP: step 1/1.</text>
</comment>
<comment type="similarity">
    <text evidence="1">Belongs to the GTP cyclohydrolase IV family.</text>
</comment>
<organism>
    <name type="scientific">Methylococcus capsulatus (strain ATCC 33009 / NCIMB 11132 / Bath)</name>
    <dbReference type="NCBI Taxonomy" id="243233"/>
    <lineage>
        <taxon>Bacteria</taxon>
        <taxon>Pseudomonadati</taxon>
        <taxon>Pseudomonadota</taxon>
        <taxon>Gammaproteobacteria</taxon>
        <taxon>Methylococcales</taxon>
        <taxon>Methylococcaceae</taxon>
        <taxon>Methylococcus</taxon>
    </lineage>
</organism>
<dbReference type="EC" id="3.5.4.16" evidence="1"/>
<dbReference type="EMBL" id="AE017282">
    <property type="protein sequence ID" value="AAU91629.1"/>
    <property type="molecule type" value="Genomic_DNA"/>
</dbReference>
<dbReference type="RefSeq" id="WP_010961546.1">
    <property type="nucleotide sequence ID" value="NC_002977.6"/>
</dbReference>
<dbReference type="SMR" id="Q605G6"/>
<dbReference type="STRING" id="243233.MCA2318"/>
<dbReference type="GeneID" id="88224522"/>
<dbReference type="KEGG" id="mca:MCA2318"/>
<dbReference type="eggNOG" id="COG1469">
    <property type="taxonomic scope" value="Bacteria"/>
</dbReference>
<dbReference type="HOGENOM" id="CLU_062816_1_1_6"/>
<dbReference type="UniPathway" id="UPA00848">
    <property type="reaction ID" value="UER00151"/>
</dbReference>
<dbReference type="Proteomes" id="UP000006821">
    <property type="component" value="Chromosome"/>
</dbReference>
<dbReference type="GO" id="GO:0003934">
    <property type="term" value="F:GTP cyclohydrolase I activity"/>
    <property type="evidence" value="ECO:0007669"/>
    <property type="project" value="UniProtKB-UniRule"/>
</dbReference>
<dbReference type="GO" id="GO:0046654">
    <property type="term" value="P:tetrahydrofolate biosynthetic process"/>
    <property type="evidence" value="ECO:0007669"/>
    <property type="project" value="UniProtKB-UniRule"/>
</dbReference>
<dbReference type="Gene3D" id="3.10.270.10">
    <property type="entry name" value="Urate Oxidase"/>
    <property type="match status" value="1"/>
</dbReference>
<dbReference type="HAMAP" id="MF_01527_B">
    <property type="entry name" value="GTP_cyclohydrol_B"/>
    <property type="match status" value="1"/>
</dbReference>
<dbReference type="InterPro" id="IPR022838">
    <property type="entry name" value="GTP_cyclohydrolase_FolE2"/>
</dbReference>
<dbReference type="InterPro" id="IPR003801">
    <property type="entry name" value="GTP_cyclohydrolase_FolE2/MptA"/>
</dbReference>
<dbReference type="NCBIfam" id="NF010200">
    <property type="entry name" value="PRK13674.1-1"/>
    <property type="match status" value="1"/>
</dbReference>
<dbReference type="PANTHER" id="PTHR36445">
    <property type="entry name" value="GTP CYCLOHYDROLASE MPTA"/>
    <property type="match status" value="1"/>
</dbReference>
<dbReference type="PANTHER" id="PTHR36445:SF1">
    <property type="entry name" value="GTP CYCLOHYDROLASE MPTA"/>
    <property type="match status" value="1"/>
</dbReference>
<dbReference type="Pfam" id="PF02649">
    <property type="entry name" value="GCHY-1"/>
    <property type="match status" value="1"/>
</dbReference>
<evidence type="ECO:0000255" key="1">
    <source>
        <dbReference type="HAMAP-Rule" id="MF_01527"/>
    </source>
</evidence>
<gene>
    <name evidence="1" type="primary">folE2</name>
    <name type="ordered locus">MCA2318</name>
</gene>
<accession>Q605G6</accession>
<protein>
    <recommendedName>
        <fullName evidence="1">GTP cyclohydrolase FolE2</fullName>
        <ecNumber evidence="1">3.5.4.16</ecNumber>
    </recommendedName>
</protein>
<reference key="1">
    <citation type="journal article" date="2004" name="PLoS Biol.">
        <title>Genomic insights into methanotrophy: the complete genome sequence of Methylococcus capsulatus (Bath).</title>
        <authorList>
            <person name="Ward N.L."/>
            <person name="Larsen O."/>
            <person name="Sakwa J."/>
            <person name="Bruseth L."/>
            <person name="Khouri H.M."/>
            <person name="Durkin A.S."/>
            <person name="Dimitrov G."/>
            <person name="Jiang L."/>
            <person name="Scanlan D."/>
            <person name="Kang K.H."/>
            <person name="Lewis M.R."/>
            <person name="Nelson K.E."/>
            <person name="Methe B.A."/>
            <person name="Wu M."/>
            <person name="Heidelberg J.F."/>
            <person name="Paulsen I.T."/>
            <person name="Fouts D.E."/>
            <person name="Ravel J."/>
            <person name="Tettelin H."/>
            <person name="Ren Q."/>
            <person name="Read T.D."/>
            <person name="DeBoy R.T."/>
            <person name="Seshadri R."/>
            <person name="Salzberg S.L."/>
            <person name="Jensen H.B."/>
            <person name="Birkeland N.K."/>
            <person name="Nelson W.C."/>
            <person name="Dodson R.J."/>
            <person name="Grindhaug S.H."/>
            <person name="Holt I.E."/>
            <person name="Eidhammer I."/>
            <person name="Jonasen I."/>
            <person name="Vanaken S."/>
            <person name="Utterback T.R."/>
            <person name="Feldblyum T.V."/>
            <person name="Fraser C.M."/>
            <person name="Lillehaug J.R."/>
            <person name="Eisen J.A."/>
        </authorList>
    </citation>
    <scope>NUCLEOTIDE SEQUENCE [LARGE SCALE GENOMIC DNA]</scope>
    <source>
        <strain>ATCC 33009 / NCIMB 11132 / Bath</strain>
    </source>
</reference>
<sequence length="268" mass="30505">MEEEGLAIDDVQGRADLRRIDIDRVGIKGIRHPVRVRDRSLGEQHTVARFDMAVSLPHHFKGTHMSRFVEIINGHDREIDIASFEAMLAEMMQRLNAEAGRIEMRFPYFLEKRAPVTGVRSLMDYEVALIGEVSVATTTTWLGVTVPVTSLCPCSKAISERGAHNQRSHVTTAVRMRDFVWIEELIEWVEAEASSPIYGLLKRPDEKYVTEYAYDHPRFVEDLVRGVAARLDTEPRIAAYAVEVENFESIHNHSAYALIERDKRTADA</sequence>